<gene>
    <name evidence="9 13" type="primary">Mefv</name>
</gene>
<organism evidence="12">
    <name type="scientific">Mus musculus</name>
    <name type="common">Mouse</name>
    <dbReference type="NCBI Taxonomy" id="10090"/>
    <lineage>
        <taxon>Eukaryota</taxon>
        <taxon>Metazoa</taxon>
        <taxon>Chordata</taxon>
        <taxon>Craniata</taxon>
        <taxon>Vertebrata</taxon>
        <taxon>Euteleostomi</taxon>
        <taxon>Mammalia</taxon>
        <taxon>Eutheria</taxon>
        <taxon>Euarchontoglires</taxon>
        <taxon>Glires</taxon>
        <taxon>Rodentia</taxon>
        <taxon>Myomorpha</taxon>
        <taxon>Muroidea</taxon>
        <taxon>Muridae</taxon>
        <taxon>Murinae</taxon>
        <taxon>Mus</taxon>
        <taxon>Mus</taxon>
    </lineage>
</organism>
<feature type="chain" id="PRO_0000220365" description="Pyrin">
    <location>
        <begin position="1"/>
        <end position="767"/>
    </location>
</feature>
<feature type="domain" description="Pyrin" evidence="4 11">
    <location>
        <begin position="1"/>
        <end position="92"/>
    </location>
</feature>
<feature type="zinc finger region" description="B box-type" evidence="3">
    <location>
        <begin position="439"/>
        <end position="481"/>
    </location>
</feature>
<feature type="region of interest" description="Disordered" evidence="5">
    <location>
        <begin position="94"/>
        <end position="219"/>
    </location>
</feature>
<feature type="region of interest" description="Disordered" evidence="5">
    <location>
        <begin position="311"/>
        <end position="346"/>
    </location>
</feature>
<feature type="region of interest" description="Required for homotrimerization and induction of pyroptosomes" evidence="1">
    <location>
        <begin position="489"/>
        <end position="647"/>
    </location>
</feature>
<feature type="region of interest" description="Disordered" evidence="5">
    <location>
        <begin position="697"/>
        <end position="719"/>
    </location>
</feature>
<feature type="coiled-coil region" evidence="2">
    <location>
        <begin position="481"/>
        <end position="510"/>
    </location>
</feature>
<feature type="compositionally biased region" description="Polar residues" evidence="5">
    <location>
        <begin position="126"/>
        <end position="142"/>
    </location>
</feature>
<feature type="compositionally biased region" description="Polar residues" evidence="5">
    <location>
        <begin position="165"/>
        <end position="176"/>
    </location>
</feature>
<feature type="compositionally biased region" description="Polar residues" evidence="5">
    <location>
        <begin position="183"/>
        <end position="208"/>
    </location>
</feature>
<feature type="compositionally biased region" description="Polar residues" evidence="5">
    <location>
        <begin position="321"/>
        <end position="340"/>
    </location>
</feature>
<feature type="binding site" evidence="3">
    <location>
        <position position="444"/>
    </location>
    <ligand>
        <name>Zn(2+)</name>
        <dbReference type="ChEBI" id="CHEBI:29105"/>
    </ligand>
</feature>
<feature type="binding site" evidence="3">
    <location>
        <position position="447"/>
    </location>
    <ligand>
        <name>Zn(2+)</name>
        <dbReference type="ChEBI" id="CHEBI:29105"/>
    </ligand>
</feature>
<feature type="binding site" evidence="3">
    <location>
        <position position="467"/>
    </location>
    <ligand>
        <name>Zn(2+)</name>
        <dbReference type="ChEBI" id="CHEBI:29105"/>
    </ligand>
</feature>
<feature type="binding site" evidence="3">
    <location>
        <position position="473"/>
    </location>
    <ligand>
        <name>Zn(2+)</name>
        <dbReference type="ChEBI" id="CHEBI:29105"/>
    </ligand>
</feature>
<feature type="modified residue" description="Phosphoserine" evidence="1">
    <location>
        <position position="241"/>
    </location>
</feature>
<feature type="sequence conflict" description="In Ref. 1; AAF03766." evidence="11" ref="1">
    <original>E</original>
    <variation>G</variation>
    <location>
        <position position="543"/>
    </location>
</feature>
<feature type="sequence conflict" description="In Ref. 1; AAF03766." evidence="11" ref="1">
    <original>E</original>
    <variation>G</variation>
    <location>
        <position position="565"/>
    </location>
</feature>
<keyword id="KW-0009">Actin-binding</keyword>
<keyword id="KW-0966">Cell projection</keyword>
<keyword id="KW-0175">Coiled coil</keyword>
<keyword id="KW-0963">Cytoplasm</keyword>
<keyword id="KW-0968">Cytoplasmic vesicle</keyword>
<keyword id="KW-0206">Cytoskeleton</keyword>
<keyword id="KW-0391">Immunity</keyword>
<keyword id="KW-0395">Inflammatory response</keyword>
<keyword id="KW-0399">Innate immunity</keyword>
<keyword id="KW-0479">Metal-binding</keyword>
<keyword id="KW-0493">Microtubule</keyword>
<keyword id="KW-0539">Nucleus</keyword>
<keyword id="KW-0597">Phosphoprotein</keyword>
<keyword id="KW-1185">Reference proteome</keyword>
<keyword id="KW-0862">Zinc</keyword>
<keyword id="KW-0863">Zinc-finger</keyword>
<reference evidence="11" key="1">
    <citation type="journal article" date="2000" name="Mamm. Genome">
        <title>Isolation, genomic organization, and expression analysis of the mouse and rat homologs of MEFV, the gene for familial Mediterranean fever.</title>
        <authorList>
            <person name="Chae J.J."/>
            <person name="Centola M."/>
            <person name="Aksentijevich I."/>
            <person name="Dutra A."/>
            <person name="Tran M."/>
            <person name="Wood G."/>
            <person name="Nagaraju K."/>
            <person name="Kingma D.W."/>
            <person name="Liu P.P."/>
            <person name="Kastner D.L."/>
        </authorList>
    </citation>
    <scope>NUCLEOTIDE SEQUENCE [MRNA]</scope>
    <scope>TISSUE SPECIFICITY</scope>
    <source>
        <strain>129/Sv</strain>
    </source>
</reference>
<reference key="2">
    <citation type="journal article" date="2009" name="PLoS Biol.">
        <title>Lineage-specific biology revealed by a finished genome assembly of the mouse.</title>
        <authorList>
            <person name="Church D.M."/>
            <person name="Goodstadt L."/>
            <person name="Hillier L.W."/>
            <person name="Zody M.C."/>
            <person name="Goldstein S."/>
            <person name="She X."/>
            <person name="Bult C.J."/>
            <person name="Agarwala R."/>
            <person name="Cherry J.L."/>
            <person name="DiCuccio M."/>
            <person name="Hlavina W."/>
            <person name="Kapustin Y."/>
            <person name="Meric P."/>
            <person name="Maglott D."/>
            <person name="Birtle Z."/>
            <person name="Marques A.C."/>
            <person name="Graves T."/>
            <person name="Zhou S."/>
            <person name="Teague B."/>
            <person name="Potamousis K."/>
            <person name="Churas C."/>
            <person name="Place M."/>
            <person name="Herschleb J."/>
            <person name="Runnheim R."/>
            <person name="Forrest D."/>
            <person name="Amos-Landgraf J."/>
            <person name="Schwartz D.C."/>
            <person name="Cheng Z."/>
            <person name="Lindblad-Toh K."/>
            <person name="Eichler E.E."/>
            <person name="Ponting C.P."/>
        </authorList>
    </citation>
    <scope>NUCLEOTIDE SEQUENCE [LARGE SCALE GENOMIC DNA]</scope>
    <source>
        <strain>C57BL/6J</strain>
    </source>
</reference>
<reference key="3">
    <citation type="journal article" date="2012" name="PLoS ONE">
        <title>Genetic loss of murine pyrin, the Familial Mediterranean Fever protein, increases interleukin-1beta levels.</title>
        <authorList>
            <person name="Hesker P.R."/>
            <person name="Nguyen M."/>
            <person name="Kovarova M."/>
            <person name="Ting J.P."/>
            <person name="Koller B.H."/>
        </authorList>
    </citation>
    <scope>DISRUPTION PHENOTYPE</scope>
</reference>
<reference key="4">
    <citation type="journal article" date="2021" name="Nature">
        <title>AIM2 forms a complex with pyrin and ZBP1 to drive PANoptosis and host defence.</title>
        <authorList>
            <person name="Lee S."/>
            <person name="Karki R."/>
            <person name="Wang Y."/>
            <person name="Nguyen L.N."/>
            <person name="Kalathur R.C."/>
            <person name="Kanneganti T.D."/>
        </authorList>
    </citation>
    <scope>FUNCTION</scope>
    <scope>IDENTIFICATION IN THE AIM2 PANOPTOSOME COMPLEX</scope>
</reference>
<dbReference type="EMBL" id="AF143409">
    <property type="protein sequence ID" value="AAF03766.1"/>
    <property type="molecule type" value="mRNA"/>
</dbReference>
<dbReference type="EMBL" id="AC139347">
    <property type="status" value="NOT_ANNOTATED_CDS"/>
    <property type="molecule type" value="Genomic_DNA"/>
</dbReference>
<dbReference type="CCDS" id="CCDS27907.1"/>
<dbReference type="RefSeq" id="NP_062326.2">
    <property type="nucleotide sequence ID" value="NM_019453.2"/>
</dbReference>
<dbReference type="SMR" id="Q9JJ26"/>
<dbReference type="BioGRID" id="207667">
    <property type="interactions" value="1"/>
</dbReference>
<dbReference type="ComplexPortal" id="CPX-4244">
    <property type="entry name" value="Pyrin inflammasome"/>
</dbReference>
<dbReference type="FunCoup" id="Q9JJ26">
    <property type="interactions" value="161"/>
</dbReference>
<dbReference type="STRING" id="10090.ENSMUSP00000097795"/>
<dbReference type="iPTMnet" id="Q9JJ26"/>
<dbReference type="PhosphoSitePlus" id="Q9JJ26"/>
<dbReference type="PaxDb" id="10090-ENSMUSP00000097795"/>
<dbReference type="ProteomicsDB" id="292191"/>
<dbReference type="Antibodypedia" id="10781">
    <property type="antibodies" value="214 antibodies from 32 providers"/>
</dbReference>
<dbReference type="DNASU" id="54483"/>
<dbReference type="Ensembl" id="ENSMUST00000023180.15">
    <property type="protein sequence ID" value="ENSMUSP00000023180.8"/>
    <property type="gene ID" value="ENSMUSG00000022534.15"/>
</dbReference>
<dbReference type="GeneID" id="54483"/>
<dbReference type="KEGG" id="mmu:54483"/>
<dbReference type="UCSC" id="uc007xym.2">
    <property type="organism name" value="mouse"/>
</dbReference>
<dbReference type="AGR" id="MGI:1859396"/>
<dbReference type="CTD" id="4210"/>
<dbReference type="MGI" id="MGI:1859396">
    <property type="gene designation" value="Mefv"/>
</dbReference>
<dbReference type="VEuPathDB" id="HostDB:ENSMUSG00000022534"/>
<dbReference type="eggNOG" id="KOG2177">
    <property type="taxonomic scope" value="Eukaryota"/>
</dbReference>
<dbReference type="GeneTree" id="ENSGT00940000161955"/>
<dbReference type="HOGENOM" id="CLU_016050_0_0_1"/>
<dbReference type="InParanoid" id="Q9JJ26"/>
<dbReference type="OMA" id="CQRHMKQ"/>
<dbReference type="OrthoDB" id="9445371at2759"/>
<dbReference type="Reactome" id="R-MMU-844456">
    <property type="pathway name" value="The NLRP3 inflammasome"/>
</dbReference>
<dbReference type="BioGRID-ORCS" id="54483">
    <property type="hits" value="4 hits in 76 CRISPR screens"/>
</dbReference>
<dbReference type="PRO" id="PR:Q9JJ26"/>
<dbReference type="Proteomes" id="UP000000589">
    <property type="component" value="Chromosome 16"/>
</dbReference>
<dbReference type="RNAct" id="Q9JJ26">
    <property type="molecule type" value="protein"/>
</dbReference>
<dbReference type="Bgee" id="ENSMUSG00000022534">
    <property type="expression patterns" value="Expressed in granulocyte and 45 other cell types or tissues"/>
</dbReference>
<dbReference type="ExpressionAtlas" id="Q9JJ26">
    <property type="expression patterns" value="baseline and differential"/>
</dbReference>
<dbReference type="GO" id="GO:0005776">
    <property type="term" value="C:autophagosome"/>
    <property type="evidence" value="ECO:0007669"/>
    <property type="project" value="UniProtKB-SubCell"/>
</dbReference>
<dbReference type="GO" id="GO:0061702">
    <property type="term" value="C:canonical inflammasome complex"/>
    <property type="evidence" value="ECO:0000266"/>
    <property type="project" value="ComplexPortal"/>
</dbReference>
<dbReference type="GO" id="GO:0005737">
    <property type="term" value="C:cytoplasm"/>
    <property type="evidence" value="ECO:0000250"/>
    <property type="project" value="UniProtKB"/>
</dbReference>
<dbReference type="GO" id="GO:0031410">
    <property type="term" value="C:cytoplasmic vesicle"/>
    <property type="evidence" value="ECO:0007669"/>
    <property type="project" value="UniProtKB-KW"/>
</dbReference>
<dbReference type="GO" id="GO:0030027">
    <property type="term" value="C:lamellipodium"/>
    <property type="evidence" value="ECO:0007669"/>
    <property type="project" value="UniProtKB-SubCell"/>
</dbReference>
<dbReference type="GO" id="GO:0005874">
    <property type="term" value="C:microtubule"/>
    <property type="evidence" value="ECO:0000303"/>
    <property type="project" value="ComplexPortal"/>
</dbReference>
<dbReference type="GO" id="GO:0005875">
    <property type="term" value="C:microtubule associated complex"/>
    <property type="evidence" value="ECO:0000250"/>
    <property type="project" value="UniProtKB"/>
</dbReference>
<dbReference type="GO" id="GO:0005634">
    <property type="term" value="C:nucleus"/>
    <property type="evidence" value="ECO:0007669"/>
    <property type="project" value="UniProtKB-SubCell"/>
</dbReference>
<dbReference type="GO" id="GO:0001726">
    <property type="term" value="C:ruffle"/>
    <property type="evidence" value="ECO:0007669"/>
    <property type="project" value="UniProtKB-SubCell"/>
</dbReference>
<dbReference type="GO" id="GO:0003779">
    <property type="term" value="F:actin binding"/>
    <property type="evidence" value="ECO:0000250"/>
    <property type="project" value="UniProtKB"/>
</dbReference>
<dbReference type="GO" id="GO:0008270">
    <property type="term" value="F:zinc ion binding"/>
    <property type="evidence" value="ECO:0000303"/>
    <property type="project" value="UniProtKB"/>
</dbReference>
<dbReference type="GO" id="GO:0006954">
    <property type="term" value="P:inflammatory response"/>
    <property type="evidence" value="ECO:0000250"/>
    <property type="project" value="UniProtKB"/>
</dbReference>
<dbReference type="GO" id="GO:1900016">
    <property type="term" value="P:negative regulation of cytokine production involved in inflammatory response"/>
    <property type="evidence" value="ECO:0000250"/>
    <property type="project" value="UniProtKB"/>
</dbReference>
<dbReference type="GO" id="GO:1900226">
    <property type="term" value="P:negative regulation of NLRP3 inflammasome complex assembly"/>
    <property type="evidence" value="ECO:0000250"/>
    <property type="project" value="UniProtKB"/>
</dbReference>
<dbReference type="GO" id="GO:0002221">
    <property type="term" value="P:pattern recognition receptor signaling pathway"/>
    <property type="evidence" value="ECO:0000303"/>
    <property type="project" value="ComplexPortal"/>
</dbReference>
<dbReference type="GO" id="GO:0010508">
    <property type="term" value="P:positive regulation of autophagy"/>
    <property type="evidence" value="ECO:0000250"/>
    <property type="project" value="UniProtKB"/>
</dbReference>
<dbReference type="GO" id="GO:0050729">
    <property type="term" value="P:positive regulation of inflammatory response"/>
    <property type="evidence" value="ECO:0000314"/>
    <property type="project" value="ComplexPortal"/>
</dbReference>
<dbReference type="GO" id="GO:0032731">
    <property type="term" value="P:positive regulation of interleukin-1 beta production"/>
    <property type="evidence" value="ECO:0000314"/>
    <property type="project" value="ComplexPortal"/>
</dbReference>
<dbReference type="GO" id="GO:1904270">
    <property type="term" value="P:pyroptosome complex assembly"/>
    <property type="evidence" value="ECO:0000250"/>
    <property type="project" value="UniProtKB"/>
</dbReference>
<dbReference type="GO" id="GO:0070269">
    <property type="term" value="P:pyroptotic inflammatory response"/>
    <property type="evidence" value="ECO:0000303"/>
    <property type="project" value="ComplexPortal"/>
</dbReference>
<dbReference type="GO" id="GO:0032651">
    <property type="term" value="P:regulation of interleukin-1 beta production"/>
    <property type="evidence" value="ECO:0000250"/>
    <property type="project" value="UniProtKB"/>
</dbReference>
<dbReference type="GO" id="GO:0034341">
    <property type="term" value="P:response to type II interferon"/>
    <property type="evidence" value="ECO:0000250"/>
    <property type="project" value="UniProtKB"/>
</dbReference>
<dbReference type="CDD" id="cd08321">
    <property type="entry name" value="Pyrin_ASC-like"/>
    <property type="match status" value="1"/>
</dbReference>
<dbReference type="FunFam" id="1.10.533.10:FF:000048">
    <property type="entry name" value="MEFV, pyrin innate immunity regulator"/>
    <property type="match status" value="1"/>
</dbReference>
<dbReference type="Gene3D" id="3.30.160.60">
    <property type="entry name" value="Classic Zinc Finger"/>
    <property type="match status" value="1"/>
</dbReference>
<dbReference type="Gene3D" id="1.10.533.10">
    <property type="entry name" value="Death Domain, Fas"/>
    <property type="match status" value="1"/>
</dbReference>
<dbReference type="InterPro" id="IPR004020">
    <property type="entry name" value="DAPIN"/>
</dbReference>
<dbReference type="InterPro" id="IPR011029">
    <property type="entry name" value="DEATH-like_dom_sf"/>
</dbReference>
<dbReference type="InterPro" id="IPR050143">
    <property type="entry name" value="TRIM/RBCC"/>
</dbReference>
<dbReference type="InterPro" id="IPR000315">
    <property type="entry name" value="Znf_B-box"/>
</dbReference>
<dbReference type="PANTHER" id="PTHR24103">
    <property type="entry name" value="E3 UBIQUITIN-PROTEIN LIGASE TRIM"/>
    <property type="match status" value="1"/>
</dbReference>
<dbReference type="Pfam" id="PF02758">
    <property type="entry name" value="PYRIN"/>
    <property type="match status" value="1"/>
</dbReference>
<dbReference type="Pfam" id="PF00643">
    <property type="entry name" value="zf-B_box"/>
    <property type="match status" value="1"/>
</dbReference>
<dbReference type="SMART" id="SM00336">
    <property type="entry name" value="BBOX"/>
    <property type="match status" value="1"/>
</dbReference>
<dbReference type="SMART" id="SM01289">
    <property type="entry name" value="PYRIN"/>
    <property type="match status" value="1"/>
</dbReference>
<dbReference type="SUPFAM" id="SSF57845">
    <property type="entry name" value="B-box zinc-binding domain"/>
    <property type="match status" value="1"/>
</dbReference>
<dbReference type="SUPFAM" id="SSF47986">
    <property type="entry name" value="DEATH domain"/>
    <property type="match status" value="1"/>
</dbReference>
<dbReference type="PROSITE" id="PS50824">
    <property type="entry name" value="DAPIN"/>
    <property type="match status" value="1"/>
</dbReference>
<dbReference type="PROSITE" id="PS50119">
    <property type="entry name" value="ZF_BBOX"/>
    <property type="match status" value="1"/>
</dbReference>
<comment type="function">
    <text evidence="1 8">Involved in the regulation of innate immunity and the inflammatory response in response to IFNG/IFN-gamma (PubMed:34471287). Organizes autophagic machinery by serving as a platform for the assembly of ULK1, Beclin 1/BECN1, ATG16L1, and ATG8 family members and recognizes specific autophagy targets, thus coordinating target recognition with assembly of the autophagic apparatus and initiation of autophagy (By similarity). Acts as an autophagy receptor for the degradation of several inflammasome components, including CASP1, NLRP1 and NLRP3, hence preventing excessive IL1B- and IL18-mediated inflammation (By similarity). However, it can also have a positive effect in the inflammatory pathway, acting as an innate immune sensor that triggers PYCARD/ASC specks formation, caspase-1 activation, and IL1B and IL18 production (By similarity). Together with AIM2, also acts as a mediator of pyroptosis, necroptosis and apoptosis (PANoptosis), an integral part of host defense against pathogens, in response to bacterial infection (PubMed:34471287). It is required for PSTPIP1-induced PYCARD/ASC oligomerization and inflammasome formation (By similarity). Recruits PSTPIP1 to inflammasomes, and is required for PSTPIP1 oligomerization (By similarity).</text>
</comment>
<comment type="subunit">
    <text evidence="1 8">Homotrimer. Interacts (via the B box-type zinc finger) with PSTPIP1 (By similarity). Interacts (via the B30.2/SPRY domain) with several components of the inflammasome complex, including CASP1 p20 and p10 subunits, CASP5, PYCARD, NLRP1, NLRP2 and NLRP3, as well as with unprocessed IL1B; this interaction may lead to autophagic degradation of these proteins (By similarity). Component of the AIM2 PANoptosome complex, a multiprotein complex that drives inflammatory cell death (PANoptosis) (PubMed:34471287). Interacts with NFKBIA and RELA (By similarity). Interacts weakly with VASP and ACTR3 (By similarity). Interacts with active ULK1 (phosphorylated on 'Ser-317') and BECN1 simultaneously (By similarity). Also interacts with ATG16L1 (via WD repeats), and with ATG8 family members, including GABARAP, GABARAPL1 and, to a lesser extent, GABARAPL2, MAP1LC3A/LC3A and MAP1LC3C/LC3C (By similarity). Interacts with TRIM21 (By similarity). Interacts with YWHAB, YWHAE, YWHAG, YWHAH, YWHAQ and YWHAZ; the interaction is required for the down-regulation of pyrin pro-inflammatory activity (By similarity).</text>
</comment>
<comment type="subcellular location">
    <subcellularLocation>
        <location evidence="1">Cytoplasm</location>
        <location evidence="1">Cytoskeleton</location>
    </subcellularLocation>
    <subcellularLocation>
        <location evidence="1">Cell projection</location>
        <location evidence="1">Ruffle</location>
    </subcellularLocation>
    <subcellularLocation>
        <location evidence="1">Cell projection</location>
        <location evidence="1">Lamellipodium</location>
    </subcellularLocation>
    <subcellularLocation>
        <location evidence="1">Cytoplasm</location>
    </subcellularLocation>
    <subcellularLocation>
        <location evidence="1">Cytoplasmic vesicle</location>
        <location evidence="1">Autophagosome</location>
    </subcellularLocation>
    <subcellularLocation>
        <location evidence="1">Nucleus</location>
    </subcellularLocation>
    <text evidence="1">Associated with microtubules and with the filamentous actin of perinuclear filaments and peripheral lamellar ruffles. In pre-apoptotic cells, colocalizes with PYCARD/ASC in large specks (pyroptosomes). In migrating monocytes, strongly polarized at the leading edge of the cell where it colocalizes with polymerizing actin and PYCARD/ASC (By similarity).</text>
</comment>
<comment type="tissue specificity">
    <text evidence="6">Expressed in spleen peripheral blood granulocytes. Not expressed in lymphocytes, thymus, testis, ovary, heart, brain, lung, liver, kidney and muscle.</text>
</comment>
<comment type="domain">
    <text evidence="1">The B box-type zinc finger interacts, possibly intramolecularly, with the pyrin domain; this may be an autoinhibitory mechanism released by PSTPIP1 binding.</text>
</comment>
<comment type="PTM">
    <text evidence="1">Phosphorylation at Ser-241 is required for the interaction with 14-3-3 proteins and down-regulation of pyrin pro-inflammatory activity.</text>
</comment>
<comment type="PTM">
    <text evidence="1">Degraded along with the delivery of its substrates to autolysosomal compartments (at protein level).</text>
</comment>
<comment type="disruption phenotype">
    <text evidence="7">Animals are grossly normal, with no obvious changes in thymus, spleen or lymph nodes. In vitro, resident peritoneal macrophage cells show enhanced IL1B and IL18 release in response to inflammatory stimuli.</text>
</comment>
<comment type="caution">
    <text evidence="11">Lacks the B30.2/SPRY domain found in the human ortholog, thus may have divergent function(s).</text>
</comment>
<evidence type="ECO:0000250" key="1">
    <source>
        <dbReference type="UniProtKB" id="O15553"/>
    </source>
</evidence>
<evidence type="ECO:0000255" key="2"/>
<evidence type="ECO:0000255" key="3">
    <source>
        <dbReference type="PROSITE-ProRule" id="PRU00024"/>
    </source>
</evidence>
<evidence type="ECO:0000255" key="4">
    <source>
        <dbReference type="PROSITE-ProRule" id="PRU00061"/>
    </source>
</evidence>
<evidence type="ECO:0000256" key="5">
    <source>
        <dbReference type="SAM" id="MobiDB-lite"/>
    </source>
</evidence>
<evidence type="ECO:0000269" key="6">
    <source>
    </source>
</evidence>
<evidence type="ECO:0000269" key="7">
    <source>
    </source>
</evidence>
<evidence type="ECO:0000269" key="8">
    <source>
    </source>
</evidence>
<evidence type="ECO:0000303" key="9">
    <source>
    </source>
</evidence>
<evidence type="ECO:0000303" key="10">
    <source>
    </source>
</evidence>
<evidence type="ECO:0000305" key="11"/>
<evidence type="ECO:0000312" key="12">
    <source>
        <dbReference type="EMBL" id="AAF03766.1"/>
    </source>
</evidence>
<evidence type="ECO:0000312" key="13">
    <source>
        <dbReference type="MGI" id="MGI:1859396"/>
    </source>
</evidence>
<protein>
    <recommendedName>
        <fullName evidence="10">Pyrin</fullName>
    </recommendedName>
</protein>
<name>MEFV_MOUSE</name>
<accession>Q9JJ26</accession>
<accession>E9QN30</accession>
<sequence>MAKTLGDHLLNTLEELLPYDFEKFKFKLQNTSLEKGHSKIPRGHMQMARPVKLASLLITYYGEEYAVRLTLQILRATNQRQLAEELRKATGTEHLIEENRVGGSVQSSVENKAKSVKVPDVPEGDGTQQNNDESDTLPSSQAEVGKGPQKKSLTKRKDQRGPESLDSQTKPWTRSTAPLYRRTQGTQSPGDKESTASAQLRRNVSSAGRLQGLYNNAPGRRESKKAEVYVYLPSGKKRPRSLEITTYSREGEPPNSEVLPTQEETRNGSLIRMRTATLNGRTTGALEKGTGIPEHSMVLDEKTFRNMSSKTSLIGEERCPTSWTENGNGSPETTESSGETAGSILSDPEVPLSLCEKPAKTPEDPASLGQAACEGRSQDKAVCPLCHTQEGDLRGDTCVQSSCSCSIAPGDPKASGRCSICFQCQGLLARKSCEAQSPQSLPQCPRHMKQVLLLFCEDHREPICLICRLSLEHQGHRVRPIEEAALEYKEQIREQLERLREMRGYVEEHRLQGDKKTDDFLKQTEIQKQKISCPLEKLYQLLEKQEQLFVTWLQELSQTISKVRETYYTRVSLLDEMIEELEAKQDQPEWDLMQDIGITLHRAKMMSASELLDTPPGVKEKLHLLYQKSKSVEKNMQCFSEMLSSEMAFSASDVAKWEGRQPSATQVQGLVPTVHLKCDGAHTQDCDVVFYPEREAGGSEPKDYLHPQPAQDTPELHEIHSRNNKRKFKSFLKWKPSFSRTDWRLRTCCYRDLDQAAAHPNLIFSMI</sequence>
<proteinExistence type="evidence at protein level"/>